<organism>
    <name type="scientific">Sulfurisphaera tokodaii (strain DSM 16993 / JCM 10545 / NBRC 100140 / 7)</name>
    <name type="common">Sulfolobus tokodaii</name>
    <dbReference type="NCBI Taxonomy" id="273063"/>
    <lineage>
        <taxon>Archaea</taxon>
        <taxon>Thermoproteota</taxon>
        <taxon>Thermoprotei</taxon>
        <taxon>Sulfolobales</taxon>
        <taxon>Sulfolobaceae</taxon>
        <taxon>Sulfurisphaera</taxon>
    </lineage>
</organism>
<comment type="function">
    <text evidence="1">Catalytic subunit of DNA primase, an RNA polymerase that catalyzes the synthesis of short RNA molecules used as primers for DNA polymerase during DNA replication. The small subunit contains the primase catalytic core and has DNA synthesis activity on its own. Binding to the large subunit stabilizes and modulates the activity, increasing the rate of DNA synthesis while decreasing the length of the DNA fragments, and conferring RNA synthesis capability. The DNA polymerase activity may enable DNA primase to also catalyze primer extension after primer synthesis. May also play a role in DNA repair.</text>
</comment>
<comment type="cofactor">
    <cofactor evidence="1">
        <name>Mg(2+)</name>
        <dbReference type="ChEBI" id="CHEBI:18420"/>
    </cofactor>
    <cofactor evidence="1">
        <name>Mn(2+)</name>
        <dbReference type="ChEBI" id="CHEBI:29035"/>
    </cofactor>
</comment>
<comment type="subunit">
    <text evidence="1">Heterodimer of a small subunit (PriS) and a large subunit (PriL).</text>
</comment>
<comment type="similarity">
    <text evidence="1">Belongs to the eukaryotic-type primase small subunit family.</text>
</comment>
<feature type="chain" id="PRO_0000046755" description="DNA primase small subunit PriS">
    <location>
        <begin position="1"/>
        <end position="318"/>
    </location>
</feature>
<feature type="active site" evidence="1">
    <location>
        <position position="95"/>
    </location>
</feature>
<feature type="active site" evidence="1">
    <location>
        <position position="97"/>
    </location>
</feature>
<feature type="active site" evidence="1">
    <location>
        <position position="224"/>
    </location>
</feature>
<evidence type="ECO:0000255" key="1">
    <source>
        <dbReference type="HAMAP-Rule" id="MF_00700"/>
    </source>
</evidence>
<reference key="1">
    <citation type="journal article" date="2001" name="DNA Res.">
        <title>Complete genome sequence of an aerobic thermoacidophilic Crenarchaeon, Sulfolobus tokodaii strain7.</title>
        <authorList>
            <person name="Kawarabayasi Y."/>
            <person name="Hino Y."/>
            <person name="Horikawa H."/>
            <person name="Jin-no K."/>
            <person name="Takahashi M."/>
            <person name="Sekine M."/>
            <person name="Baba S."/>
            <person name="Ankai A."/>
            <person name="Kosugi H."/>
            <person name="Hosoyama A."/>
            <person name="Fukui S."/>
            <person name="Nagai Y."/>
            <person name="Nishijima K."/>
            <person name="Otsuka R."/>
            <person name="Nakazawa H."/>
            <person name="Takamiya M."/>
            <person name="Kato Y."/>
            <person name="Yoshizawa T."/>
            <person name="Tanaka T."/>
            <person name="Kudoh Y."/>
            <person name="Yamazaki J."/>
            <person name="Kushida N."/>
            <person name="Oguchi A."/>
            <person name="Aoki K."/>
            <person name="Masuda S."/>
            <person name="Yanagii M."/>
            <person name="Nishimura M."/>
            <person name="Yamagishi A."/>
            <person name="Oshima T."/>
            <person name="Kikuchi H."/>
        </authorList>
    </citation>
    <scope>NUCLEOTIDE SEQUENCE [LARGE SCALE GENOMIC DNA]</scope>
    <source>
        <strain>DSM 16993 / JCM 10545 / NBRC 100140 / 7</strain>
    </source>
</reference>
<accession>Q973F6</accession>
<accession>F9VNB9</accession>
<gene>
    <name evidence="1" type="primary">priS</name>
    <name type="synonym">priA</name>
    <name type="ordered locus">STK_09430</name>
</gene>
<protein>
    <recommendedName>
        <fullName evidence="1">DNA primase small subunit PriS</fullName>
        <ecNumber evidence="1">2.7.7.-</ecNumber>
    </recommendedName>
</protein>
<name>PRIS_SULTO</name>
<sequence length="318" mass="36702">MHQEQNKIIKILFSEYYEKAELDLPNDMELREFAYQPFDSETYVRHLSFSSPQELRQYILQNVPLHLYYSSARYQLPSAKEMDEKGWLGSDLLFDLDADEICEVKVRRFCPQDGYETLASNCNGEPPIEYAEITTECIMKVFEKALLIRDILKEDFGLNARIFFSGNRGFHLRVTCYEDCALLDPDDRKEIAEYFTSPKPPVIYEGNPGWSGRIAKGIEGINIDTQVTIDIRRLVRIPGSLNGKAGLMVVEIKNDKFEYGEWLSPFDGDCIFLPYVSAELTLFNNKYTVKRTYPIKIDTRIGVYLALKGLGKVKAYVR</sequence>
<proteinExistence type="inferred from homology"/>
<keyword id="KW-0235">DNA replication</keyword>
<keyword id="KW-0240">DNA-directed RNA polymerase</keyword>
<keyword id="KW-0460">Magnesium</keyword>
<keyword id="KW-0464">Manganese</keyword>
<keyword id="KW-0479">Metal-binding</keyword>
<keyword id="KW-0548">Nucleotidyltransferase</keyword>
<keyword id="KW-0639">Primosome</keyword>
<keyword id="KW-1185">Reference proteome</keyword>
<keyword id="KW-0804">Transcription</keyword>
<keyword id="KW-0808">Transferase</keyword>
<dbReference type="EC" id="2.7.7.-" evidence="1"/>
<dbReference type="EMBL" id="BA000023">
    <property type="protein sequence ID" value="BAK54416.1"/>
    <property type="molecule type" value="Genomic_DNA"/>
</dbReference>
<dbReference type="SMR" id="Q973F6"/>
<dbReference type="STRING" id="273063.STK_09430"/>
<dbReference type="KEGG" id="sto:STK_09430"/>
<dbReference type="PATRIC" id="fig|273063.9.peg.1055"/>
<dbReference type="eggNOG" id="arCOG04110">
    <property type="taxonomic scope" value="Archaea"/>
</dbReference>
<dbReference type="Proteomes" id="UP000001015">
    <property type="component" value="Chromosome"/>
</dbReference>
<dbReference type="GO" id="GO:0000428">
    <property type="term" value="C:DNA-directed RNA polymerase complex"/>
    <property type="evidence" value="ECO:0007669"/>
    <property type="project" value="UniProtKB-KW"/>
</dbReference>
<dbReference type="GO" id="GO:1990077">
    <property type="term" value="C:primosome complex"/>
    <property type="evidence" value="ECO:0007669"/>
    <property type="project" value="UniProtKB-KW"/>
</dbReference>
<dbReference type="GO" id="GO:0003899">
    <property type="term" value="F:DNA-directed RNA polymerase activity"/>
    <property type="evidence" value="ECO:0007669"/>
    <property type="project" value="InterPro"/>
</dbReference>
<dbReference type="GO" id="GO:0046872">
    <property type="term" value="F:metal ion binding"/>
    <property type="evidence" value="ECO:0007669"/>
    <property type="project" value="UniProtKB-KW"/>
</dbReference>
<dbReference type="GO" id="GO:0006269">
    <property type="term" value="P:DNA replication, synthesis of primer"/>
    <property type="evidence" value="ECO:0007669"/>
    <property type="project" value="UniProtKB-UniRule"/>
</dbReference>
<dbReference type="CDD" id="cd04860">
    <property type="entry name" value="AE_Prim_S"/>
    <property type="match status" value="1"/>
</dbReference>
<dbReference type="Gene3D" id="3.90.920.10">
    <property type="entry name" value="DNA primase, PRIM domain"/>
    <property type="match status" value="1"/>
</dbReference>
<dbReference type="HAMAP" id="MF_00700">
    <property type="entry name" value="DNA_primase_sml_arc"/>
    <property type="match status" value="1"/>
</dbReference>
<dbReference type="InterPro" id="IPR014052">
    <property type="entry name" value="DNA_primase_ssu_euk/arc"/>
</dbReference>
<dbReference type="InterPro" id="IPR023639">
    <property type="entry name" value="DNA_primase_ssu_PriS"/>
</dbReference>
<dbReference type="NCBIfam" id="NF001641">
    <property type="entry name" value="PRK00419.1-3"/>
    <property type="match status" value="1"/>
</dbReference>
<dbReference type="PANTHER" id="PTHR10536">
    <property type="entry name" value="DNA PRIMASE SMALL SUBUNIT"/>
    <property type="match status" value="1"/>
</dbReference>
<dbReference type="Pfam" id="PF20873">
    <property type="entry name" value="PriS_C"/>
    <property type="match status" value="1"/>
</dbReference>
<dbReference type="SUPFAM" id="SSF56747">
    <property type="entry name" value="Prim-pol domain"/>
    <property type="match status" value="1"/>
</dbReference>